<evidence type="ECO:0000255" key="1">
    <source>
        <dbReference type="HAMAP-Rule" id="MF_01849"/>
    </source>
</evidence>
<evidence type="ECO:0000255" key="2">
    <source>
        <dbReference type="PROSITE-ProRule" id="PRU01266"/>
    </source>
</evidence>
<gene>
    <name evidence="1" type="primary">rlmN</name>
    <name type="ordered locus">PHZ_c3488</name>
</gene>
<feature type="chain" id="PRO_1000188588" description="Dual-specificity RNA methyltransferase RlmN">
    <location>
        <begin position="1"/>
        <end position="385"/>
    </location>
</feature>
<feature type="domain" description="Radical SAM core" evidence="2">
    <location>
        <begin position="120"/>
        <end position="352"/>
    </location>
</feature>
<feature type="active site" description="Proton acceptor" evidence="1">
    <location>
        <position position="113"/>
    </location>
</feature>
<feature type="active site" description="S-methylcysteine intermediate" evidence="1">
    <location>
        <position position="363"/>
    </location>
</feature>
<feature type="binding site" evidence="1">
    <location>
        <position position="134"/>
    </location>
    <ligand>
        <name>[4Fe-4S] cluster</name>
        <dbReference type="ChEBI" id="CHEBI:49883"/>
        <note>4Fe-4S-S-AdoMet</note>
    </ligand>
</feature>
<feature type="binding site" evidence="1">
    <location>
        <position position="138"/>
    </location>
    <ligand>
        <name>[4Fe-4S] cluster</name>
        <dbReference type="ChEBI" id="CHEBI:49883"/>
        <note>4Fe-4S-S-AdoMet</note>
    </ligand>
</feature>
<feature type="binding site" evidence="1">
    <location>
        <position position="141"/>
    </location>
    <ligand>
        <name>[4Fe-4S] cluster</name>
        <dbReference type="ChEBI" id="CHEBI:49883"/>
        <note>4Fe-4S-S-AdoMet</note>
    </ligand>
</feature>
<feature type="binding site" evidence="1">
    <location>
        <begin position="189"/>
        <end position="190"/>
    </location>
    <ligand>
        <name>S-adenosyl-L-methionine</name>
        <dbReference type="ChEBI" id="CHEBI:59789"/>
    </ligand>
</feature>
<feature type="binding site" evidence="1">
    <location>
        <position position="221"/>
    </location>
    <ligand>
        <name>S-adenosyl-L-methionine</name>
        <dbReference type="ChEBI" id="CHEBI:59789"/>
    </ligand>
</feature>
<feature type="binding site" evidence="1">
    <location>
        <begin position="243"/>
        <end position="245"/>
    </location>
    <ligand>
        <name>S-adenosyl-L-methionine</name>
        <dbReference type="ChEBI" id="CHEBI:59789"/>
    </ligand>
</feature>
<feature type="binding site" evidence="1">
    <location>
        <position position="320"/>
    </location>
    <ligand>
        <name>S-adenosyl-L-methionine</name>
        <dbReference type="ChEBI" id="CHEBI:59789"/>
    </ligand>
</feature>
<feature type="disulfide bond" description="(transient)" evidence="1">
    <location>
        <begin position="127"/>
        <end position="363"/>
    </location>
</feature>
<organism>
    <name type="scientific">Phenylobacterium zucineum (strain HLK1)</name>
    <dbReference type="NCBI Taxonomy" id="450851"/>
    <lineage>
        <taxon>Bacteria</taxon>
        <taxon>Pseudomonadati</taxon>
        <taxon>Pseudomonadota</taxon>
        <taxon>Alphaproteobacteria</taxon>
        <taxon>Caulobacterales</taxon>
        <taxon>Caulobacteraceae</taxon>
        <taxon>Phenylobacterium</taxon>
    </lineage>
</organism>
<sequence>MGVTLDLARAPAQPLAPSRPNLSGMTRAELAACLVELGVVRPEKAKMRASQLWRWMHHYGVTDFEKMTDVAKETRAALAEVCAISRPQVVERQVSKDGTRKWLIRMAPGIEVETVYIPDVGRAGALCVSSQVGCTLNCTFCHTGTQALVRNLTAAEIVAQVQVARDDLGEWPSPKEDRRLSNIVFMGMGEPLYNLDNVAAAIDIIADNEGIAISRRRITVSTSGVVPELAALGERTQAMLAISLHATNDELREKLVPLNRKYPIAELMAAIRAYPGLSNSKRVTFEYVMLKGVNDSPAEAKALVNLLKGVPAKINLIPFNPWPGSQYECSDWGTIERFAAVLNRAGYASPIRTPRGRDILAACGQLKSESEKLRASARRKLAAGG</sequence>
<accession>B4RCA4</accession>
<name>RLMN_PHEZH</name>
<keyword id="KW-0004">4Fe-4S</keyword>
<keyword id="KW-0963">Cytoplasm</keyword>
<keyword id="KW-1015">Disulfide bond</keyword>
<keyword id="KW-0408">Iron</keyword>
<keyword id="KW-0411">Iron-sulfur</keyword>
<keyword id="KW-0479">Metal-binding</keyword>
<keyword id="KW-0489">Methyltransferase</keyword>
<keyword id="KW-1185">Reference proteome</keyword>
<keyword id="KW-0698">rRNA processing</keyword>
<keyword id="KW-0949">S-adenosyl-L-methionine</keyword>
<keyword id="KW-0808">Transferase</keyword>
<keyword id="KW-0819">tRNA processing</keyword>
<proteinExistence type="inferred from homology"/>
<reference key="1">
    <citation type="journal article" date="2008" name="BMC Genomics">
        <title>Complete genome of Phenylobacterium zucineum - a novel facultative intracellular bacterium isolated from human erythroleukemia cell line K562.</title>
        <authorList>
            <person name="Luo Y."/>
            <person name="Xu X."/>
            <person name="Ding Z."/>
            <person name="Liu Z."/>
            <person name="Zhang B."/>
            <person name="Yan Z."/>
            <person name="Sun J."/>
            <person name="Hu S."/>
            <person name="Hu X."/>
        </authorList>
    </citation>
    <scope>NUCLEOTIDE SEQUENCE [LARGE SCALE GENOMIC DNA]</scope>
    <source>
        <strain>HLK1</strain>
    </source>
</reference>
<dbReference type="EC" id="2.1.1.192" evidence="1"/>
<dbReference type="EMBL" id="CP000747">
    <property type="protein sequence ID" value="ACG79897.1"/>
    <property type="molecule type" value="Genomic_DNA"/>
</dbReference>
<dbReference type="RefSeq" id="WP_012524035.1">
    <property type="nucleotide sequence ID" value="NC_011144.1"/>
</dbReference>
<dbReference type="SMR" id="B4RCA4"/>
<dbReference type="STRING" id="450851.PHZ_c3488"/>
<dbReference type="KEGG" id="pzu:PHZ_c3488"/>
<dbReference type="eggNOG" id="COG0820">
    <property type="taxonomic scope" value="Bacteria"/>
</dbReference>
<dbReference type="HOGENOM" id="CLU_029101_2_0_5"/>
<dbReference type="OrthoDB" id="9793973at2"/>
<dbReference type="Proteomes" id="UP000001868">
    <property type="component" value="Chromosome"/>
</dbReference>
<dbReference type="GO" id="GO:0005737">
    <property type="term" value="C:cytoplasm"/>
    <property type="evidence" value="ECO:0007669"/>
    <property type="project" value="UniProtKB-SubCell"/>
</dbReference>
<dbReference type="GO" id="GO:0051539">
    <property type="term" value="F:4 iron, 4 sulfur cluster binding"/>
    <property type="evidence" value="ECO:0007669"/>
    <property type="project" value="UniProtKB-UniRule"/>
</dbReference>
<dbReference type="GO" id="GO:0046872">
    <property type="term" value="F:metal ion binding"/>
    <property type="evidence" value="ECO:0007669"/>
    <property type="project" value="UniProtKB-KW"/>
</dbReference>
<dbReference type="GO" id="GO:0070040">
    <property type="term" value="F:rRNA (adenine(2503)-C2-)-methyltransferase activity"/>
    <property type="evidence" value="ECO:0007669"/>
    <property type="project" value="UniProtKB-UniRule"/>
</dbReference>
<dbReference type="GO" id="GO:0019843">
    <property type="term" value="F:rRNA binding"/>
    <property type="evidence" value="ECO:0007669"/>
    <property type="project" value="UniProtKB-UniRule"/>
</dbReference>
<dbReference type="GO" id="GO:0002935">
    <property type="term" value="F:tRNA (adenine(37)-C2)-methyltransferase activity"/>
    <property type="evidence" value="ECO:0007669"/>
    <property type="project" value="UniProtKB-UniRule"/>
</dbReference>
<dbReference type="GO" id="GO:0000049">
    <property type="term" value="F:tRNA binding"/>
    <property type="evidence" value="ECO:0007669"/>
    <property type="project" value="UniProtKB-UniRule"/>
</dbReference>
<dbReference type="GO" id="GO:0070475">
    <property type="term" value="P:rRNA base methylation"/>
    <property type="evidence" value="ECO:0007669"/>
    <property type="project" value="UniProtKB-UniRule"/>
</dbReference>
<dbReference type="GO" id="GO:0030488">
    <property type="term" value="P:tRNA methylation"/>
    <property type="evidence" value="ECO:0007669"/>
    <property type="project" value="UniProtKB-UniRule"/>
</dbReference>
<dbReference type="CDD" id="cd01335">
    <property type="entry name" value="Radical_SAM"/>
    <property type="match status" value="1"/>
</dbReference>
<dbReference type="FunFam" id="3.20.20.70:FF:000008">
    <property type="entry name" value="Dual-specificity RNA methyltransferase RlmN"/>
    <property type="match status" value="1"/>
</dbReference>
<dbReference type="Gene3D" id="1.10.150.530">
    <property type="match status" value="1"/>
</dbReference>
<dbReference type="Gene3D" id="3.20.20.70">
    <property type="entry name" value="Aldolase class I"/>
    <property type="match status" value="1"/>
</dbReference>
<dbReference type="HAMAP" id="MF_01849">
    <property type="entry name" value="RNA_methyltr_RlmN"/>
    <property type="match status" value="1"/>
</dbReference>
<dbReference type="InterPro" id="IPR013785">
    <property type="entry name" value="Aldolase_TIM"/>
</dbReference>
<dbReference type="InterPro" id="IPR006638">
    <property type="entry name" value="Elp3/MiaA/NifB-like_rSAM"/>
</dbReference>
<dbReference type="InterPro" id="IPR040072">
    <property type="entry name" value="Methyltransferase_A"/>
</dbReference>
<dbReference type="InterPro" id="IPR048641">
    <property type="entry name" value="RlmN_N"/>
</dbReference>
<dbReference type="InterPro" id="IPR027492">
    <property type="entry name" value="RNA_MTrfase_RlmN"/>
</dbReference>
<dbReference type="InterPro" id="IPR004383">
    <property type="entry name" value="rRNA_lsu_MTrfase_RlmN/Cfr"/>
</dbReference>
<dbReference type="InterPro" id="IPR007197">
    <property type="entry name" value="rSAM"/>
</dbReference>
<dbReference type="NCBIfam" id="TIGR00048">
    <property type="entry name" value="rRNA_mod_RlmN"/>
    <property type="match status" value="1"/>
</dbReference>
<dbReference type="PANTHER" id="PTHR30544">
    <property type="entry name" value="23S RRNA METHYLTRANSFERASE"/>
    <property type="match status" value="1"/>
</dbReference>
<dbReference type="PANTHER" id="PTHR30544:SF5">
    <property type="entry name" value="RADICAL SAM CORE DOMAIN-CONTAINING PROTEIN"/>
    <property type="match status" value="1"/>
</dbReference>
<dbReference type="Pfam" id="PF04055">
    <property type="entry name" value="Radical_SAM"/>
    <property type="match status" value="1"/>
</dbReference>
<dbReference type="Pfam" id="PF21016">
    <property type="entry name" value="RlmN_N"/>
    <property type="match status" value="1"/>
</dbReference>
<dbReference type="PIRSF" id="PIRSF006004">
    <property type="entry name" value="CHP00048"/>
    <property type="match status" value="1"/>
</dbReference>
<dbReference type="SFLD" id="SFLDF00275">
    <property type="entry name" value="adenosine_C2_methyltransferase"/>
    <property type="match status" value="1"/>
</dbReference>
<dbReference type="SFLD" id="SFLDS00029">
    <property type="entry name" value="Radical_SAM"/>
    <property type="match status" value="1"/>
</dbReference>
<dbReference type="SMART" id="SM00729">
    <property type="entry name" value="Elp3"/>
    <property type="match status" value="1"/>
</dbReference>
<dbReference type="SUPFAM" id="SSF102114">
    <property type="entry name" value="Radical SAM enzymes"/>
    <property type="match status" value="1"/>
</dbReference>
<dbReference type="PROSITE" id="PS51918">
    <property type="entry name" value="RADICAL_SAM"/>
    <property type="match status" value="1"/>
</dbReference>
<comment type="function">
    <text evidence="1">Specifically methylates position 2 of adenine 2503 in 23S rRNA and position 2 of adenine 37 in tRNAs. m2A2503 modification seems to play a crucial role in the proofreading step occurring at the peptidyl transferase center and thus would serve to optimize ribosomal fidelity.</text>
</comment>
<comment type="catalytic activity">
    <reaction evidence="1">
        <text>adenosine(2503) in 23S rRNA + 2 reduced [2Fe-2S]-[ferredoxin] + 2 S-adenosyl-L-methionine = 2-methyladenosine(2503) in 23S rRNA + 5'-deoxyadenosine + L-methionine + 2 oxidized [2Fe-2S]-[ferredoxin] + S-adenosyl-L-homocysteine</text>
        <dbReference type="Rhea" id="RHEA:42916"/>
        <dbReference type="Rhea" id="RHEA-COMP:10000"/>
        <dbReference type="Rhea" id="RHEA-COMP:10001"/>
        <dbReference type="Rhea" id="RHEA-COMP:10152"/>
        <dbReference type="Rhea" id="RHEA-COMP:10282"/>
        <dbReference type="ChEBI" id="CHEBI:17319"/>
        <dbReference type="ChEBI" id="CHEBI:33737"/>
        <dbReference type="ChEBI" id="CHEBI:33738"/>
        <dbReference type="ChEBI" id="CHEBI:57844"/>
        <dbReference type="ChEBI" id="CHEBI:57856"/>
        <dbReference type="ChEBI" id="CHEBI:59789"/>
        <dbReference type="ChEBI" id="CHEBI:74411"/>
        <dbReference type="ChEBI" id="CHEBI:74497"/>
        <dbReference type="EC" id="2.1.1.192"/>
    </reaction>
</comment>
<comment type="catalytic activity">
    <reaction evidence="1">
        <text>adenosine(37) in tRNA + 2 reduced [2Fe-2S]-[ferredoxin] + 2 S-adenosyl-L-methionine = 2-methyladenosine(37) in tRNA + 5'-deoxyadenosine + L-methionine + 2 oxidized [2Fe-2S]-[ferredoxin] + S-adenosyl-L-homocysteine</text>
        <dbReference type="Rhea" id="RHEA:43332"/>
        <dbReference type="Rhea" id="RHEA-COMP:10000"/>
        <dbReference type="Rhea" id="RHEA-COMP:10001"/>
        <dbReference type="Rhea" id="RHEA-COMP:10162"/>
        <dbReference type="Rhea" id="RHEA-COMP:10485"/>
        <dbReference type="ChEBI" id="CHEBI:17319"/>
        <dbReference type="ChEBI" id="CHEBI:33737"/>
        <dbReference type="ChEBI" id="CHEBI:33738"/>
        <dbReference type="ChEBI" id="CHEBI:57844"/>
        <dbReference type="ChEBI" id="CHEBI:57856"/>
        <dbReference type="ChEBI" id="CHEBI:59789"/>
        <dbReference type="ChEBI" id="CHEBI:74411"/>
        <dbReference type="ChEBI" id="CHEBI:74497"/>
        <dbReference type="EC" id="2.1.1.192"/>
    </reaction>
</comment>
<comment type="cofactor">
    <cofactor evidence="1">
        <name>[4Fe-4S] cluster</name>
        <dbReference type="ChEBI" id="CHEBI:49883"/>
    </cofactor>
    <text evidence="1">Binds 1 [4Fe-4S] cluster. The cluster is coordinated with 3 cysteines and an exchangeable S-adenosyl-L-methionine.</text>
</comment>
<comment type="subcellular location">
    <subcellularLocation>
        <location evidence="1">Cytoplasm</location>
    </subcellularLocation>
</comment>
<comment type="miscellaneous">
    <text evidence="1">Reaction proceeds by a ping-pong mechanism involving intermediate methylation of a conserved cysteine residue.</text>
</comment>
<comment type="similarity">
    <text evidence="1">Belongs to the radical SAM superfamily. RlmN family.</text>
</comment>
<protein>
    <recommendedName>
        <fullName evidence="1">Dual-specificity RNA methyltransferase RlmN</fullName>
        <ecNumber evidence="1">2.1.1.192</ecNumber>
    </recommendedName>
    <alternativeName>
        <fullName evidence="1">23S rRNA (adenine(2503)-C(2))-methyltransferase</fullName>
    </alternativeName>
    <alternativeName>
        <fullName evidence="1">23S rRNA m2A2503 methyltransferase</fullName>
    </alternativeName>
    <alternativeName>
        <fullName evidence="1">Ribosomal RNA large subunit methyltransferase N</fullName>
    </alternativeName>
    <alternativeName>
        <fullName evidence="1">tRNA (adenine(37)-C(2))-methyltransferase</fullName>
    </alternativeName>
    <alternativeName>
        <fullName evidence="1">tRNA m2A37 methyltransferase</fullName>
    </alternativeName>
</protein>